<sequence length="97" mass="9967">MAKTATPGACASDPGSGPLPENYEMALAELEALVARMEGGTLSLEDSLAAYRRGAALVAFCQQQLEKAEQQVRVLDGASLKPLSAGTAAADGEDDDL</sequence>
<gene>
    <name evidence="1" type="primary">xseB</name>
    <name type="ordered locus">BPSS1764</name>
</gene>
<evidence type="ECO:0000255" key="1">
    <source>
        <dbReference type="HAMAP-Rule" id="MF_00337"/>
    </source>
</evidence>
<evidence type="ECO:0000256" key="2">
    <source>
        <dbReference type="SAM" id="MobiDB-lite"/>
    </source>
</evidence>
<reference key="1">
    <citation type="journal article" date="2004" name="Proc. Natl. Acad. Sci. U.S.A.">
        <title>Genomic plasticity of the causative agent of melioidosis, Burkholderia pseudomallei.</title>
        <authorList>
            <person name="Holden M.T.G."/>
            <person name="Titball R.W."/>
            <person name="Peacock S.J."/>
            <person name="Cerdeno-Tarraga A.-M."/>
            <person name="Atkins T."/>
            <person name="Crossman L.C."/>
            <person name="Pitt T."/>
            <person name="Churcher C."/>
            <person name="Mungall K.L."/>
            <person name="Bentley S.D."/>
            <person name="Sebaihia M."/>
            <person name="Thomson N.R."/>
            <person name="Bason N."/>
            <person name="Beacham I.R."/>
            <person name="Brooks K."/>
            <person name="Brown K.A."/>
            <person name="Brown N.F."/>
            <person name="Challis G.L."/>
            <person name="Cherevach I."/>
            <person name="Chillingworth T."/>
            <person name="Cronin A."/>
            <person name="Crossett B."/>
            <person name="Davis P."/>
            <person name="DeShazer D."/>
            <person name="Feltwell T."/>
            <person name="Fraser A."/>
            <person name="Hance Z."/>
            <person name="Hauser H."/>
            <person name="Holroyd S."/>
            <person name="Jagels K."/>
            <person name="Keith K.E."/>
            <person name="Maddison M."/>
            <person name="Moule S."/>
            <person name="Price C."/>
            <person name="Quail M.A."/>
            <person name="Rabbinowitsch E."/>
            <person name="Rutherford K."/>
            <person name="Sanders M."/>
            <person name="Simmonds M."/>
            <person name="Songsivilai S."/>
            <person name="Stevens K."/>
            <person name="Tumapa S."/>
            <person name="Vesaratchavest M."/>
            <person name="Whitehead S."/>
            <person name="Yeats C."/>
            <person name="Barrell B.G."/>
            <person name="Oyston P.C.F."/>
            <person name="Parkhill J."/>
        </authorList>
    </citation>
    <scope>NUCLEOTIDE SEQUENCE [LARGE SCALE GENOMIC DNA]</scope>
    <source>
        <strain>K96243</strain>
    </source>
</reference>
<protein>
    <recommendedName>
        <fullName evidence="1">Exodeoxyribonuclease 7 small subunit</fullName>
        <ecNumber evidence="1">3.1.11.6</ecNumber>
    </recommendedName>
    <alternativeName>
        <fullName evidence="1">Exodeoxyribonuclease VII small subunit</fullName>
        <shortName evidence="1">Exonuclease VII small subunit</shortName>
    </alternativeName>
</protein>
<feature type="chain" id="PRO_0000206932" description="Exodeoxyribonuclease 7 small subunit">
    <location>
        <begin position="1"/>
        <end position="97"/>
    </location>
</feature>
<feature type="region of interest" description="Disordered" evidence="2">
    <location>
        <begin position="1"/>
        <end position="21"/>
    </location>
</feature>
<organism>
    <name type="scientific">Burkholderia pseudomallei (strain K96243)</name>
    <dbReference type="NCBI Taxonomy" id="272560"/>
    <lineage>
        <taxon>Bacteria</taxon>
        <taxon>Pseudomonadati</taxon>
        <taxon>Pseudomonadota</taxon>
        <taxon>Betaproteobacteria</taxon>
        <taxon>Burkholderiales</taxon>
        <taxon>Burkholderiaceae</taxon>
        <taxon>Burkholderia</taxon>
        <taxon>pseudomallei group</taxon>
    </lineage>
</organism>
<accession>Q63JF2</accession>
<comment type="function">
    <text evidence="1">Bidirectionally degrades single-stranded DNA into large acid-insoluble oligonucleotides, which are then degraded further into small acid-soluble oligonucleotides.</text>
</comment>
<comment type="catalytic activity">
    <reaction evidence="1">
        <text>Exonucleolytic cleavage in either 5'- to 3'- or 3'- to 5'-direction to yield nucleoside 5'-phosphates.</text>
        <dbReference type="EC" id="3.1.11.6"/>
    </reaction>
</comment>
<comment type="subunit">
    <text evidence="1">Heterooligomer composed of large and small subunits.</text>
</comment>
<comment type="subcellular location">
    <subcellularLocation>
        <location evidence="1">Cytoplasm</location>
    </subcellularLocation>
</comment>
<comment type="similarity">
    <text evidence="1">Belongs to the XseB family.</text>
</comment>
<name>EX7S_BURPS</name>
<keyword id="KW-0963">Cytoplasm</keyword>
<keyword id="KW-0269">Exonuclease</keyword>
<keyword id="KW-0378">Hydrolase</keyword>
<keyword id="KW-0540">Nuclease</keyword>
<keyword id="KW-1185">Reference proteome</keyword>
<proteinExistence type="inferred from homology"/>
<dbReference type="EC" id="3.1.11.6" evidence="1"/>
<dbReference type="EMBL" id="BX571966">
    <property type="protein sequence ID" value="CAH39239.1"/>
    <property type="molecule type" value="Genomic_DNA"/>
</dbReference>
<dbReference type="RefSeq" id="WP_004190549.1">
    <property type="nucleotide sequence ID" value="NZ_CP009537.1"/>
</dbReference>
<dbReference type="RefSeq" id="YP_111770.1">
    <property type="nucleotide sequence ID" value="NC_006351.1"/>
</dbReference>
<dbReference type="SMR" id="Q63JF2"/>
<dbReference type="STRING" id="272560.BPSS1764"/>
<dbReference type="KEGG" id="bps:BPSS1764"/>
<dbReference type="PATRIC" id="fig|272560.51.peg.5195"/>
<dbReference type="eggNOG" id="COG1722">
    <property type="taxonomic scope" value="Bacteria"/>
</dbReference>
<dbReference type="Proteomes" id="UP000000605">
    <property type="component" value="Chromosome 2"/>
</dbReference>
<dbReference type="GO" id="GO:0005829">
    <property type="term" value="C:cytosol"/>
    <property type="evidence" value="ECO:0007669"/>
    <property type="project" value="TreeGrafter"/>
</dbReference>
<dbReference type="GO" id="GO:0009318">
    <property type="term" value="C:exodeoxyribonuclease VII complex"/>
    <property type="evidence" value="ECO:0007669"/>
    <property type="project" value="InterPro"/>
</dbReference>
<dbReference type="GO" id="GO:0008855">
    <property type="term" value="F:exodeoxyribonuclease VII activity"/>
    <property type="evidence" value="ECO:0007669"/>
    <property type="project" value="UniProtKB-UniRule"/>
</dbReference>
<dbReference type="GO" id="GO:0006308">
    <property type="term" value="P:DNA catabolic process"/>
    <property type="evidence" value="ECO:0007669"/>
    <property type="project" value="UniProtKB-UniRule"/>
</dbReference>
<dbReference type="Gene3D" id="1.10.287.1040">
    <property type="entry name" value="Exonuclease VII, small subunit"/>
    <property type="match status" value="1"/>
</dbReference>
<dbReference type="HAMAP" id="MF_00337">
    <property type="entry name" value="Exonuc_7_S"/>
    <property type="match status" value="1"/>
</dbReference>
<dbReference type="InterPro" id="IPR003761">
    <property type="entry name" value="Exonuc_VII_S"/>
</dbReference>
<dbReference type="InterPro" id="IPR037004">
    <property type="entry name" value="Exonuc_VII_ssu_sf"/>
</dbReference>
<dbReference type="NCBIfam" id="NF002141">
    <property type="entry name" value="PRK00977.1-5"/>
    <property type="match status" value="1"/>
</dbReference>
<dbReference type="NCBIfam" id="TIGR01280">
    <property type="entry name" value="xseB"/>
    <property type="match status" value="1"/>
</dbReference>
<dbReference type="PANTHER" id="PTHR34137">
    <property type="entry name" value="EXODEOXYRIBONUCLEASE 7 SMALL SUBUNIT"/>
    <property type="match status" value="1"/>
</dbReference>
<dbReference type="PANTHER" id="PTHR34137:SF1">
    <property type="entry name" value="EXODEOXYRIBONUCLEASE 7 SMALL SUBUNIT"/>
    <property type="match status" value="1"/>
</dbReference>
<dbReference type="Pfam" id="PF02609">
    <property type="entry name" value="Exonuc_VII_S"/>
    <property type="match status" value="1"/>
</dbReference>
<dbReference type="SUPFAM" id="SSF116842">
    <property type="entry name" value="XseB-like"/>
    <property type="match status" value="1"/>
</dbReference>